<accession>B6JNE8</accession>
<comment type="function">
    <text evidence="1">One of the primary rRNA binding proteins, it binds specifically to the 5'-end of 16S ribosomal RNA.</text>
</comment>
<comment type="subunit">
    <text evidence="1">Part of the 30S ribosomal subunit.</text>
</comment>
<comment type="similarity">
    <text evidence="1">Belongs to the universal ribosomal protein uS17 family.</text>
</comment>
<name>RS17_HELP2</name>
<organism>
    <name type="scientific">Helicobacter pylori (strain P12)</name>
    <dbReference type="NCBI Taxonomy" id="570508"/>
    <lineage>
        <taxon>Bacteria</taxon>
        <taxon>Pseudomonadati</taxon>
        <taxon>Campylobacterota</taxon>
        <taxon>Epsilonproteobacteria</taxon>
        <taxon>Campylobacterales</taxon>
        <taxon>Helicobacteraceae</taxon>
        <taxon>Helicobacter</taxon>
    </lineage>
</organism>
<dbReference type="EMBL" id="CP001217">
    <property type="protein sequence ID" value="ACJ08426.1"/>
    <property type="molecule type" value="Genomic_DNA"/>
</dbReference>
<dbReference type="SMR" id="B6JNE8"/>
<dbReference type="KEGG" id="hpp:HPP12_1274"/>
<dbReference type="HOGENOM" id="CLU_073626_1_1_7"/>
<dbReference type="Proteomes" id="UP000008198">
    <property type="component" value="Chromosome"/>
</dbReference>
<dbReference type="GO" id="GO:0022627">
    <property type="term" value="C:cytosolic small ribosomal subunit"/>
    <property type="evidence" value="ECO:0007669"/>
    <property type="project" value="TreeGrafter"/>
</dbReference>
<dbReference type="GO" id="GO:0019843">
    <property type="term" value="F:rRNA binding"/>
    <property type="evidence" value="ECO:0007669"/>
    <property type="project" value="UniProtKB-UniRule"/>
</dbReference>
<dbReference type="GO" id="GO:0003735">
    <property type="term" value="F:structural constituent of ribosome"/>
    <property type="evidence" value="ECO:0007669"/>
    <property type="project" value="InterPro"/>
</dbReference>
<dbReference type="GO" id="GO:0006412">
    <property type="term" value="P:translation"/>
    <property type="evidence" value="ECO:0007669"/>
    <property type="project" value="UniProtKB-UniRule"/>
</dbReference>
<dbReference type="CDD" id="cd00364">
    <property type="entry name" value="Ribosomal_uS17"/>
    <property type="match status" value="1"/>
</dbReference>
<dbReference type="FunFam" id="2.40.50.140:FF:000108">
    <property type="entry name" value="30S ribosomal protein S17"/>
    <property type="match status" value="1"/>
</dbReference>
<dbReference type="Gene3D" id="2.40.50.140">
    <property type="entry name" value="Nucleic acid-binding proteins"/>
    <property type="match status" value="1"/>
</dbReference>
<dbReference type="HAMAP" id="MF_01345_B">
    <property type="entry name" value="Ribosomal_uS17_B"/>
    <property type="match status" value="1"/>
</dbReference>
<dbReference type="InterPro" id="IPR012340">
    <property type="entry name" value="NA-bd_OB-fold"/>
</dbReference>
<dbReference type="InterPro" id="IPR000266">
    <property type="entry name" value="Ribosomal_uS17"/>
</dbReference>
<dbReference type="InterPro" id="IPR019984">
    <property type="entry name" value="Ribosomal_uS17_bact/chlr"/>
</dbReference>
<dbReference type="InterPro" id="IPR019979">
    <property type="entry name" value="Ribosomal_uS17_CS"/>
</dbReference>
<dbReference type="NCBIfam" id="NF004123">
    <property type="entry name" value="PRK05610.1"/>
    <property type="match status" value="1"/>
</dbReference>
<dbReference type="NCBIfam" id="TIGR03635">
    <property type="entry name" value="uS17_bact"/>
    <property type="match status" value="1"/>
</dbReference>
<dbReference type="PANTHER" id="PTHR10744">
    <property type="entry name" value="40S RIBOSOMAL PROTEIN S11 FAMILY MEMBER"/>
    <property type="match status" value="1"/>
</dbReference>
<dbReference type="PANTHER" id="PTHR10744:SF1">
    <property type="entry name" value="SMALL RIBOSOMAL SUBUNIT PROTEIN US17M"/>
    <property type="match status" value="1"/>
</dbReference>
<dbReference type="Pfam" id="PF00366">
    <property type="entry name" value="Ribosomal_S17"/>
    <property type="match status" value="1"/>
</dbReference>
<dbReference type="PRINTS" id="PR00973">
    <property type="entry name" value="RIBOSOMALS17"/>
</dbReference>
<dbReference type="SUPFAM" id="SSF50249">
    <property type="entry name" value="Nucleic acid-binding proteins"/>
    <property type="match status" value="1"/>
</dbReference>
<dbReference type="PROSITE" id="PS00056">
    <property type="entry name" value="RIBOSOMAL_S17"/>
    <property type="match status" value="1"/>
</dbReference>
<gene>
    <name evidence="1" type="primary">rpsQ</name>
    <name type="ordered locus">HPP12_1274</name>
</gene>
<reference key="1">
    <citation type="submission" date="2008-10" db="EMBL/GenBank/DDBJ databases">
        <title>The complete genome sequence of Helicobacter pylori strain P12.</title>
        <authorList>
            <person name="Fischer W."/>
            <person name="Windhager L."/>
            <person name="Karnholz A."/>
            <person name="Zeiller M."/>
            <person name="Zimmer R."/>
            <person name="Haas R."/>
        </authorList>
    </citation>
    <scope>NUCLEOTIDE SEQUENCE [LARGE SCALE GENOMIC DNA]</scope>
    <source>
        <strain>P12</strain>
    </source>
</reference>
<proteinExistence type="inferred from homology"/>
<sequence length="86" mass="9939">MNTKEPHKRLVQGKVISKFAEKSAVILVERKVVHEKYRKIVKKFKKYTIHDENNQVKVGDFVSAIECRPLSKTKSFTLKEILVVGV</sequence>
<feature type="chain" id="PRO_1000143264" description="Small ribosomal subunit protein uS17">
    <location>
        <begin position="1"/>
        <end position="86"/>
    </location>
</feature>
<keyword id="KW-0687">Ribonucleoprotein</keyword>
<keyword id="KW-0689">Ribosomal protein</keyword>
<keyword id="KW-0694">RNA-binding</keyword>
<keyword id="KW-0699">rRNA-binding</keyword>
<evidence type="ECO:0000255" key="1">
    <source>
        <dbReference type="HAMAP-Rule" id="MF_01345"/>
    </source>
</evidence>
<evidence type="ECO:0000305" key="2"/>
<protein>
    <recommendedName>
        <fullName evidence="1">Small ribosomal subunit protein uS17</fullName>
    </recommendedName>
    <alternativeName>
        <fullName evidence="2">30S ribosomal protein S17</fullName>
    </alternativeName>
</protein>